<protein>
    <recommendedName>
        <fullName evidence="1">Cell division topological specificity factor</fullName>
    </recommendedName>
</protein>
<reference key="1">
    <citation type="journal article" date="2009" name="J. Bacteriol.">
        <title>Genome sequences of three Agrobacterium biovars help elucidate the evolution of multichromosome genomes in bacteria.</title>
        <authorList>
            <person name="Slater S.C."/>
            <person name="Goldman B.S."/>
            <person name="Goodner B."/>
            <person name="Setubal J.C."/>
            <person name="Farrand S.K."/>
            <person name="Nester E.W."/>
            <person name="Burr T.J."/>
            <person name="Banta L."/>
            <person name="Dickerman A.W."/>
            <person name="Paulsen I."/>
            <person name="Otten L."/>
            <person name="Suen G."/>
            <person name="Welch R."/>
            <person name="Almeida N.F."/>
            <person name="Arnold F."/>
            <person name="Burton O.T."/>
            <person name="Du Z."/>
            <person name="Ewing A."/>
            <person name="Godsy E."/>
            <person name="Heisel S."/>
            <person name="Houmiel K.L."/>
            <person name="Jhaveri J."/>
            <person name="Lu J."/>
            <person name="Miller N.M."/>
            <person name="Norton S."/>
            <person name="Chen Q."/>
            <person name="Phoolcharoen W."/>
            <person name="Ohlin V."/>
            <person name="Ondrusek D."/>
            <person name="Pride N."/>
            <person name="Stricklin S.L."/>
            <person name="Sun J."/>
            <person name="Wheeler C."/>
            <person name="Wilson L."/>
            <person name="Zhu H."/>
            <person name="Wood D.W."/>
        </authorList>
    </citation>
    <scope>NUCLEOTIDE SEQUENCE [LARGE SCALE GENOMIC DNA]</scope>
    <source>
        <strain>ATCC BAA-846 / DSM 112012 / S4</strain>
    </source>
</reference>
<keyword id="KW-0131">Cell cycle</keyword>
<keyword id="KW-0132">Cell division</keyword>
<keyword id="KW-1185">Reference proteome</keyword>
<organism>
    <name type="scientific">Allorhizobium ampelinum (strain ATCC BAA-846 / DSM 112012 / S4)</name>
    <name type="common">Agrobacterium vitis (strain S4)</name>
    <dbReference type="NCBI Taxonomy" id="311402"/>
    <lineage>
        <taxon>Bacteria</taxon>
        <taxon>Pseudomonadati</taxon>
        <taxon>Pseudomonadota</taxon>
        <taxon>Alphaproteobacteria</taxon>
        <taxon>Hyphomicrobiales</taxon>
        <taxon>Rhizobiaceae</taxon>
        <taxon>Rhizobium/Agrobacterium group</taxon>
        <taxon>Allorhizobium</taxon>
        <taxon>Allorhizobium ampelinum</taxon>
    </lineage>
</organism>
<comment type="function">
    <text evidence="1">Prevents the cell division inhibition by proteins MinC and MinD at internal division sites while permitting inhibition at polar sites. This ensures cell division at the proper site by restricting the formation of a division septum at the midpoint of the long axis of the cell.</text>
</comment>
<comment type="similarity">
    <text evidence="1">Belongs to the MinE family.</text>
</comment>
<dbReference type="EMBL" id="CP000633">
    <property type="protein sequence ID" value="ACM37516.1"/>
    <property type="molecule type" value="Genomic_DNA"/>
</dbReference>
<dbReference type="RefSeq" id="WP_015916929.1">
    <property type="nucleotide sequence ID" value="NC_011989.1"/>
</dbReference>
<dbReference type="SMR" id="B9JRA5"/>
<dbReference type="STRING" id="311402.Avi_3506"/>
<dbReference type="KEGG" id="avi:Avi_3506"/>
<dbReference type="eggNOG" id="COG0851">
    <property type="taxonomic scope" value="Bacteria"/>
</dbReference>
<dbReference type="HOGENOM" id="CLU_137929_2_0_5"/>
<dbReference type="Proteomes" id="UP000001596">
    <property type="component" value="Chromosome 1"/>
</dbReference>
<dbReference type="GO" id="GO:0051301">
    <property type="term" value="P:cell division"/>
    <property type="evidence" value="ECO:0007669"/>
    <property type="project" value="UniProtKB-KW"/>
</dbReference>
<dbReference type="GO" id="GO:0032955">
    <property type="term" value="P:regulation of division septum assembly"/>
    <property type="evidence" value="ECO:0007669"/>
    <property type="project" value="InterPro"/>
</dbReference>
<dbReference type="Gene3D" id="3.30.1070.10">
    <property type="entry name" value="Cell division topological specificity factor MinE"/>
    <property type="match status" value="1"/>
</dbReference>
<dbReference type="HAMAP" id="MF_00262">
    <property type="entry name" value="MinE"/>
    <property type="match status" value="1"/>
</dbReference>
<dbReference type="InterPro" id="IPR005527">
    <property type="entry name" value="MinE"/>
</dbReference>
<dbReference type="InterPro" id="IPR036707">
    <property type="entry name" value="MinE_sf"/>
</dbReference>
<dbReference type="NCBIfam" id="TIGR01215">
    <property type="entry name" value="minE"/>
    <property type="match status" value="1"/>
</dbReference>
<dbReference type="NCBIfam" id="NF001422">
    <property type="entry name" value="PRK00296.1"/>
    <property type="match status" value="1"/>
</dbReference>
<dbReference type="Pfam" id="PF03776">
    <property type="entry name" value="MinE"/>
    <property type="match status" value="1"/>
</dbReference>
<dbReference type="SUPFAM" id="SSF55229">
    <property type="entry name" value="Cell division protein MinE topological specificity domain"/>
    <property type="match status" value="1"/>
</dbReference>
<accession>B9JRA5</accession>
<proteinExistence type="inferred from homology"/>
<name>MINE_ALLAM</name>
<gene>
    <name evidence="1" type="primary">minE</name>
    <name type="ordered locus">Avi_3506</name>
</gene>
<evidence type="ECO:0000255" key="1">
    <source>
        <dbReference type="HAMAP-Rule" id="MF_00262"/>
    </source>
</evidence>
<sequence>MSIFNLFRRPTSAPMARERLQVLLAHERAAQGSDLVAILREEILAVISKHVQVDADKVRIKVDRDEHVSILEIDVEIPRDAQALAA</sequence>
<feature type="chain" id="PRO_1000191267" description="Cell division topological specificity factor">
    <location>
        <begin position="1"/>
        <end position="86"/>
    </location>
</feature>